<reference key="1">
    <citation type="submission" date="2007-09" db="EMBL/GenBank/DDBJ databases">
        <title>Complete genome sequence of Rickettsia akari.</title>
        <authorList>
            <person name="Madan A."/>
            <person name="Fahey J."/>
            <person name="Helton E."/>
            <person name="Ketteman M."/>
            <person name="Madan A."/>
            <person name="Rodrigues S."/>
            <person name="Sanchez A."/>
            <person name="Whiting M."/>
            <person name="Dasch G."/>
            <person name="Eremeeva M."/>
        </authorList>
    </citation>
    <scope>NUCLEOTIDE SEQUENCE [LARGE SCALE GENOMIC DNA]</scope>
    <source>
        <strain>Hartford</strain>
    </source>
</reference>
<accession>A8GP42</accession>
<evidence type="ECO:0000255" key="1">
    <source>
        <dbReference type="HAMAP-Rule" id="MF_01382"/>
    </source>
</evidence>
<evidence type="ECO:0000256" key="2">
    <source>
        <dbReference type="SAM" id="MobiDB-lite"/>
    </source>
</evidence>
<comment type="function">
    <text evidence="1">Part of the Sec protein translocase complex. Interacts with the SecYEG preprotein conducting channel. Has a central role in coupling the hydrolysis of ATP to the transfer of proteins into and across the cell membrane, serving both as a receptor for the preprotein-SecB complex and as an ATP-driven molecular motor driving the stepwise translocation of polypeptide chains across the membrane.</text>
</comment>
<comment type="catalytic activity">
    <reaction evidence="1">
        <text>ATP + H2O + cellular proteinSide 1 = ADP + phosphate + cellular proteinSide 2.</text>
        <dbReference type="EC" id="7.4.2.8"/>
    </reaction>
</comment>
<comment type="cofactor">
    <cofactor evidence="1">
        <name>Zn(2+)</name>
        <dbReference type="ChEBI" id="CHEBI:29105"/>
    </cofactor>
    <text evidence="1">May bind 1 zinc ion per subunit.</text>
</comment>
<comment type="subunit">
    <text evidence="1">Monomer and homodimer. Part of the essential Sec protein translocation apparatus which comprises SecA, SecYEG and auxiliary proteins SecDF-YajC and YidC.</text>
</comment>
<comment type="subcellular location">
    <subcellularLocation>
        <location evidence="1">Cell inner membrane</location>
        <topology evidence="1">Peripheral membrane protein</topology>
        <orientation evidence="1">Cytoplasmic side</orientation>
    </subcellularLocation>
    <subcellularLocation>
        <location evidence="1">Cytoplasm</location>
    </subcellularLocation>
    <text evidence="1">Distribution is 50-50.</text>
</comment>
<comment type="similarity">
    <text evidence="1">Belongs to the SecA family.</text>
</comment>
<proteinExistence type="inferred from homology"/>
<feature type="chain" id="PRO_0000320974" description="Protein translocase subunit SecA">
    <location>
        <begin position="1"/>
        <end position="906"/>
    </location>
</feature>
<feature type="region of interest" description="Disordered" evidence="2">
    <location>
        <begin position="863"/>
        <end position="885"/>
    </location>
</feature>
<feature type="binding site" evidence="1">
    <location>
        <position position="86"/>
    </location>
    <ligand>
        <name>ATP</name>
        <dbReference type="ChEBI" id="CHEBI:30616"/>
    </ligand>
</feature>
<feature type="binding site" evidence="1">
    <location>
        <begin position="104"/>
        <end position="108"/>
    </location>
    <ligand>
        <name>ATP</name>
        <dbReference type="ChEBI" id="CHEBI:30616"/>
    </ligand>
</feature>
<feature type="binding site" evidence="1">
    <location>
        <position position="499"/>
    </location>
    <ligand>
        <name>ATP</name>
        <dbReference type="ChEBI" id="CHEBI:30616"/>
    </ligand>
</feature>
<feature type="binding site" evidence="1">
    <location>
        <position position="890"/>
    </location>
    <ligand>
        <name>Zn(2+)</name>
        <dbReference type="ChEBI" id="CHEBI:29105"/>
    </ligand>
</feature>
<feature type="binding site" evidence="1">
    <location>
        <position position="892"/>
    </location>
    <ligand>
        <name>Zn(2+)</name>
        <dbReference type="ChEBI" id="CHEBI:29105"/>
    </ligand>
</feature>
<feature type="binding site" evidence="1">
    <location>
        <position position="901"/>
    </location>
    <ligand>
        <name>Zn(2+)</name>
        <dbReference type="ChEBI" id="CHEBI:29105"/>
    </ligand>
</feature>
<feature type="binding site" evidence="1">
    <location>
        <position position="902"/>
    </location>
    <ligand>
        <name>Zn(2+)</name>
        <dbReference type="ChEBI" id="CHEBI:29105"/>
    </ligand>
</feature>
<name>SECA_RICAH</name>
<dbReference type="EC" id="7.4.2.8" evidence="1"/>
<dbReference type="EMBL" id="CP000847">
    <property type="protein sequence ID" value="ABV75167.1"/>
    <property type="molecule type" value="Genomic_DNA"/>
</dbReference>
<dbReference type="RefSeq" id="WP_012149797.1">
    <property type="nucleotide sequence ID" value="NC_009881.1"/>
</dbReference>
<dbReference type="SMR" id="A8GP42"/>
<dbReference type="STRING" id="293614.A1C_04485"/>
<dbReference type="KEGG" id="rak:A1C_04485"/>
<dbReference type="eggNOG" id="COG0653">
    <property type="taxonomic scope" value="Bacteria"/>
</dbReference>
<dbReference type="HOGENOM" id="CLU_005314_3_0_5"/>
<dbReference type="Proteomes" id="UP000006830">
    <property type="component" value="Chromosome"/>
</dbReference>
<dbReference type="GO" id="GO:0031522">
    <property type="term" value="C:cell envelope Sec protein transport complex"/>
    <property type="evidence" value="ECO:0007669"/>
    <property type="project" value="TreeGrafter"/>
</dbReference>
<dbReference type="GO" id="GO:0005829">
    <property type="term" value="C:cytosol"/>
    <property type="evidence" value="ECO:0007669"/>
    <property type="project" value="TreeGrafter"/>
</dbReference>
<dbReference type="GO" id="GO:0005886">
    <property type="term" value="C:plasma membrane"/>
    <property type="evidence" value="ECO:0007669"/>
    <property type="project" value="UniProtKB-SubCell"/>
</dbReference>
<dbReference type="GO" id="GO:0005524">
    <property type="term" value="F:ATP binding"/>
    <property type="evidence" value="ECO:0007669"/>
    <property type="project" value="UniProtKB-UniRule"/>
</dbReference>
<dbReference type="GO" id="GO:0046872">
    <property type="term" value="F:metal ion binding"/>
    <property type="evidence" value="ECO:0007669"/>
    <property type="project" value="UniProtKB-KW"/>
</dbReference>
<dbReference type="GO" id="GO:0008564">
    <property type="term" value="F:protein-exporting ATPase activity"/>
    <property type="evidence" value="ECO:0007669"/>
    <property type="project" value="UniProtKB-EC"/>
</dbReference>
<dbReference type="GO" id="GO:0065002">
    <property type="term" value="P:intracellular protein transmembrane transport"/>
    <property type="evidence" value="ECO:0007669"/>
    <property type="project" value="UniProtKB-UniRule"/>
</dbReference>
<dbReference type="GO" id="GO:0017038">
    <property type="term" value="P:protein import"/>
    <property type="evidence" value="ECO:0007669"/>
    <property type="project" value="InterPro"/>
</dbReference>
<dbReference type="GO" id="GO:0006605">
    <property type="term" value="P:protein targeting"/>
    <property type="evidence" value="ECO:0007669"/>
    <property type="project" value="UniProtKB-UniRule"/>
</dbReference>
<dbReference type="GO" id="GO:0043952">
    <property type="term" value="P:protein transport by the Sec complex"/>
    <property type="evidence" value="ECO:0007669"/>
    <property type="project" value="TreeGrafter"/>
</dbReference>
<dbReference type="CDD" id="cd17928">
    <property type="entry name" value="DEXDc_SecA"/>
    <property type="match status" value="1"/>
</dbReference>
<dbReference type="CDD" id="cd18803">
    <property type="entry name" value="SF2_C_secA"/>
    <property type="match status" value="1"/>
</dbReference>
<dbReference type="FunFam" id="3.40.50.300:FF:000113">
    <property type="entry name" value="Preprotein translocase subunit SecA"/>
    <property type="match status" value="1"/>
</dbReference>
<dbReference type="FunFam" id="3.90.1440.10:FF:000001">
    <property type="entry name" value="Preprotein translocase subunit SecA"/>
    <property type="match status" value="1"/>
</dbReference>
<dbReference type="FunFam" id="1.10.3060.10:FF:000003">
    <property type="entry name" value="Protein translocase subunit SecA"/>
    <property type="match status" value="1"/>
</dbReference>
<dbReference type="FunFam" id="3.40.50.300:FF:000334">
    <property type="entry name" value="Protein translocase subunit SecA"/>
    <property type="match status" value="1"/>
</dbReference>
<dbReference type="Gene3D" id="1.10.3060.10">
    <property type="entry name" value="Helical scaffold and wing domains of SecA"/>
    <property type="match status" value="1"/>
</dbReference>
<dbReference type="Gene3D" id="3.40.50.300">
    <property type="entry name" value="P-loop containing nucleotide triphosphate hydrolases"/>
    <property type="match status" value="2"/>
</dbReference>
<dbReference type="Gene3D" id="3.90.1440.10">
    <property type="entry name" value="SecA, preprotein cross-linking domain"/>
    <property type="match status" value="1"/>
</dbReference>
<dbReference type="HAMAP" id="MF_01382">
    <property type="entry name" value="SecA"/>
    <property type="match status" value="1"/>
</dbReference>
<dbReference type="InterPro" id="IPR014001">
    <property type="entry name" value="Helicase_ATP-bd"/>
</dbReference>
<dbReference type="InterPro" id="IPR027417">
    <property type="entry name" value="P-loop_NTPase"/>
</dbReference>
<dbReference type="InterPro" id="IPR004027">
    <property type="entry name" value="SEC_C_motif"/>
</dbReference>
<dbReference type="InterPro" id="IPR000185">
    <property type="entry name" value="SecA"/>
</dbReference>
<dbReference type="InterPro" id="IPR020937">
    <property type="entry name" value="SecA_CS"/>
</dbReference>
<dbReference type="InterPro" id="IPR011115">
    <property type="entry name" value="SecA_DEAD"/>
</dbReference>
<dbReference type="InterPro" id="IPR014018">
    <property type="entry name" value="SecA_motor_DEAD"/>
</dbReference>
<dbReference type="InterPro" id="IPR011130">
    <property type="entry name" value="SecA_preprotein_X-link_dom"/>
</dbReference>
<dbReference type="InterPro" id="IPR044722">
    <property type="entry name" value="SecA_SF2_C"/>
</dbReference>
<dbReference type="InterPro" id="IPR011116">
    <property type="entry name" value="SecA_Wing/Scaffold"/>
</dbReference>
<dbReference type="InterPro" id="IPR036266">
    <property type="entry name" value="SecA_Wing/Scaffold_sf"/>
</dbReference>
<dbReference type="InterPro" id="IPR036670">
    <property type="entry name" value="SecA_X-link_sf"/>
</dbReference>
<dbReference type="NCBIfam" id="NF009538">
    <property type="entry name" value="PRK12904.1"/>
    <property type="match status" value="1"/>
</dbReference>
<dbReference type="NCBIfam" id="TIGR00963">
    <property type="entry name" value="secA"/>
    <property type="match status" value="1"/>
</dbReference>
<dbReference type="PANTHER" id="PTHR30612:SF0">
    <property type="entry name" value="CHLOROPLAST PROTEIN-TRANSPORTING ATPASE"/>
    <property type="match status" value="1"/>
</dbReference>
<dbReference type="PANTHER" id="PTHR30612">
    <property type="entry name" value="SECA INNER MEMBRANE COMPONENT OF SEC PROTEIN SECRETION SYSTEM"/>
    <property type="match status" value="1"/>
</dbReference>
<dbReference type="Pfam" id="PF21090">
    <property type="entry name" value="P-loop_SecA"/>
    <property type="match status" value="1"/>
</dbReference>
<dbReference type="Pfam" id="PF02810">
    <property type="entry name" value="SEC-C"/>
    <property type="match status" value="1"/>
</dbReference>
<dbReference type="Pfam" id="PF07517">
    <property type="entry name" value="SecA_DEAD"/>
    <property type="match status" value="1"/>
</dbReference>
<dbReference type="Pfam" id="PF01043">
    <property type="entry name" value="SecA_PP_bind"/>
    <property type="match status" value="1"/>
</dbReference>
<dbReference type="Pfam" id="PF07516">
    <property type="entry name" value="SecA_SW"/>
    <property type="match status" value="1"/>
</dbReference>
<dbReference type="PRINTS" id="PR00906">
    <property type="entry name" value="SECA"/>
</dbReference>
<dbReference type="SMART" id="SM00957">
    <property type="entry name" value="SecA_DEAD"/>
    <property type="match status" value="1"/>
</dbReference>
<dbReference type="SMART" id="SM00958">
    <property type="entry name" value="SecA_PP_bind"/>
    <property type="match status" value="1"/>
</dbReference>
<dbReference type="SUPFAM" id="SSF81886">
    <property type="entry name" value="Helical scaffold and wing domains of SecA"/>
    <property type="match status" value="1"/>
</dbReference>
<dbReference type="SUPFAM" id="SSF52540">
    <property type="entry name" value="P-loop containing nucleoside triphosphate hydrolases"/>
    <property type="match status" value="2"/>
</dbReference>
<dbReference type="SUPFAM" id="SSF81767">
    <property type="entry name" value="Pre-protein crosslinking domain of SecA"/>
    <property type="match status" value="1"/>
</dbReference>
<dbReference type="PROSITE" id="PS01312">
    <property type="entry name" value="SECA"/>
    <property type="match status" value="1"/>
</dbReference>
<dbReference type="PROSITE" id="PS51196">
    <property type="entry name" value="SECA_MOTOR_DEAD"/>
    <property type="match status" value="1"/>
</dbReference>
<protein>
    <recommendedName>
        <fullName evidence="1">Protein translocase subunit SecA</fullName>
        <ecNumber evidence="1">7.4.2.8</ecNumber>
    </recommendedName>
</protein>
<keyword id="KW-0067">ATP-binding</keyword>
<keyword id="KW-0997">Cell inner membrane</keyword>
<keyword id="KW-1003">Cell membrane</keyword>
<keyword id="KW-0963">Cytoplasm</keyword>
<keyword id="KW-0472">Membrane</keyword>
<keyword id="KW-0479">Metal-binding</keyword>
<keyword id="KW-0547">Nucleotide-binding</keyword>
<keyword id="KW-0653">Protein transport</keyword>
<keyword id="KW-1278">Translocase</keyword>
<keyword id="KW-0811">Translocation</keyword>
<keyword id="KW-0813">Transport</keyword>
<keyword id="KW-0862">Zinc</keyword>
<gene>
    <name evidence="1" type="primary">secA</name>
    <name type="ordered locus">A1C_04485</name>
</gene>
<sequence>MLSILKKLFGTANDRTVKKLFSEITKINSLEHAIQKLSDEELKNKTVEFKEKLKNGATLDDIVYEAFAVVREAARRVCGMRHFDVQLIGGLILHRGMITEMRTGEGKTLVATLPAYLNALTGKGVHVVTVNDYLARRDSAAMGKIYNFLGLSVGCIVAGMPDEAKRAAYNADITHATNNELGFDYLRDNMKYSLQERVLRPFNFAIIDEVDSILIDEARTPLVISGPVNDNSELYGKIDKIVRLLNINDFEKDEKLKTINLTETGITHIESLLSKEGIIKPDTGLYDFENLTLVHYVNQALRAHNMFTVDVDYLVREGKVMIIDEFTGRVMEGRRYSEGLHQALEAKENVKIQNENQTLASVTFQNYFRNYPKLSGMTGTAMTEAPELKDIYNLDVVAVPTHNKVTRLDLDDEIYGSKKEKYDAILKLIKDCYDRGQPILVGTISIEKSEELSSVLNAEKIPHKVLNAKFHEQEACIIAQAGRFKAVTIATNMAGRGTDIMLGGNPEMLIEHLDKDHNYAAKIDEIKAQIAEEKKQVIEAGGLFVIGTERHESRRIDNQLRGRSGRQGDPGKTKFFLSLDDDLMRIFASDRISGVLRTLGLKDGEAIQHPMISRSLEKAQQKVEGYNYEMRKNLLRFDDVMNDQRKIIYEQRTEIIKSKDSYGFLNSTTEELAKKIVLAFMPVGSYREDWDIENLSVELHRVFAIKFDHNLVSKSDVTEEEITKIVIQMAHDVYKSKEEAYSSELMHNAVKYILLTTLDQVWKDHLYSLDHLRQGISLRAYAQKDPLSEYKREAFNLFEQMLNNLKELFIQAVYHFHIDLKHVQKEDVSLERKKLQNNMRESREDPAFSKYNAGSSLETHLKPVVSRIDPKDRNPDDPTSWGRVSRNELCPCSSGKKYKYCHGAHE</sequence>
<organism>
    <name type="scientific">Rickettsia akari (strain Hartford)</name>
    <dbReference type="NCBI Taxonomy" id="293614"/>
    <lineage>
        <taxon>Bacteria</taxon>
        <taxon>Pseudomonadati</taxon>
        <taxon>Pseudomonadota</taxon>
        <taxon>Alphaproteobacteria</taxon>
        <taxon>Rickettsiales</taxon>
        <taxon>Rickettsiaceae</taxon>
        <taxon>Rickettsieae</taxon>
        <taxon>Rickettsia</taxon>
        <taxon>spotted fever group</taxon>
    </lineage>
</organism>